<evidence type="ECO:0000255" key="1">
    <source>
        <dbReference type="HAMAP-Rule" id="MF_00379"/>
    </source>
</evidence>
<dbReference type="EC" id="3.6.-.-" evidence="1"/>
<dbReference type="EMBL" id="AP008230">
    <property type="protein sequence ID" value="BAE86844.1"/>
    <property type="molecule type" value="Genomic_DNA"/>
</dbReference>
<dbReference type="RefSeq" id="WP_011462330.1">
    <property type="nucleotide sequence ID" value="NC_007907.1"/>
</dbReference>
<dbReference type="SMR" id="Q24M98"/>
<dbReference type="STRING" id="138119.DSY5055"/>
<dbReference type="KEGG" id="dsy:DSY5055"/>
<dbReference type="eggNOG" id="COG0486">
    <property type="taxonomic scope" value="Bacteria"/>
</dbReference>
<dbReference type="HOGENOM" id="CLU_019624_4_1_9"/>
<dbReference type="Proteomes" id="UP000001946">
    <property type="component" value="Chromosome"/>
</dbReference>
<dbReference type="GO" id="GO:0005829">
    <property type="term" value="C:cytosol"/>
    <property type="evidence" value="ECO:0007669"/>
    <property type="project" value="TreeGrafter"/>
</dbReference>
<dbReference type="GO" id="GO:0005525">
    <property type="term" value="F:GTP binding"/>
    <property type="evidence" value="ECO:0007669"/>
    <property type="project" value="UniProtKB-UniRule"/>
</dbReference>
<dbReference type="GO" id="GO:0003924">
    <property type="term" value="F:GTPase activity"/>
    <property type="evidence" value="ECO:0007669"/>
    <property type="project" value="UniProtKB-UniRule"/>
</dbReference>
<dbReference type="GO" id="GO:0046872">
    <property type="term" value="F:metal ion binding"/>
    <property type="evidence" value="ECO:0007669"/>
    <property type="project" value="UniProtKB-KW"/>
</dbReference>
<dbReference type="GO" id="GO:0030488">
    <property type="term" value="P:tRNA methylation"/>
    <property type="evidence" value="ECO:0007669"/>
    <property type="project" value="TreeGrafter"/>
</dbReference>
<dbReference type="GO" id="GO:0002098">
    <property type="term" value="P:tRNA wobble uridine modification"/>
    <property type="evidence" value="ECO:0007669"/>
    <property type="project" value="TreeGrafter"/>
</dbReference>
<dbReference type="CDD" id="cd04164">
    <property type="entry name" value="trmE"/>
    <property type="match status" value="1"/>
</dbReference>
<dbReference type="CDD" id="cd14858">
    <property type="entry name" value="TrmE_N"/>
    <property type="match status" value="1"/>
</dbReference>
<dbReference type="FunFam" id="3.40.50.300:FF:001376">
    <property type="entry name" value="tRNA modification GTPase MnmE"/>
    <property type="match status" value="1"/>
</dbReference>
<dbReference type="Gene3D" id="3.40.50.300">
    <property type="entry name" value="P-loop containing nucleotide triphosphate hydrolases"/>
    <property type="match status" value="1"/>
</dbReference>
<dbReference type="Gene3D" id="3.30.1360.120">
    <property type="entry name" value="Probable tRNA modification gtpase trme, domain 1"/>
    <property type="match status" value="1"/>
</dbReference>
<dbReference type="Gene3D" id="1.20.120.430">
    <property type="entry name" value="tRNA modification GTPase MnmE domain 2"/>
    <property type="match status" value="1"/>
</dbReference>
<dbReference type="HAMAP" id="MF_00379">
    <property type="entry name" value="GTPase_MnmE"/>
    <property type="match status" value="1"/>
</dbReference>
<dbReference type="InterPro" id="IPR031168">
    <property type="entry name" value="G_TrmE"/>
</dbReference>
<dbReference type="InterPro" id="IPR006073">
    <property type="entry name" value="GTP-bd"/>
</dbReference>
<dbReference type="InterPro" id="IPR018948">
    <property type="entry name" value="GTP-bd_TrmE_N"/>
</dbReference>
<dbReference type="InterPro" id="IPR004520">
    <property type="entry name" value="GTPase_MnmE"/>
</dbReference>
<dbReference type="InterPro" id="IPR027368">
    <property type="entry name" value="MnmE_dom2"/>
</dbReference>
<dbReference type="InterPro" id="IPR025867">
    <property type="entry name" value="MnmE_helical"/>
</dbReference>
<dbReference type="InterPro" id="IPR027417">
    <property type="entry name" value="P-loop_NTPase"/>
</dbReference>
<dbReference type="InterPro" id="IPR005225">
    <property type="entry name" value="Small_GTP-bd"/>
</dbReference>
<dbReference type="InterPro" id="IPR027266">
    <property type="entry name" value="TrmE/GcvT_dom1"/>
</dbReference>
<dbReference type="NCBIfam" id="TIGR00450">
    <property type="entry name" value="mnmE_trmE_thdF"/>
    <property type="match status" value="1"/>
</dbReference>
<dbReference type="NCBIfam" id="NF003661">
    <property type="entry name" value="PRK05291.1-3"/>
    <property type="match status" value="1"/>
</dbReference>
<dbReference type="NCBIfam" id="TIGR00231">
    <property type="entry name" value="small_GTP"/>
    <property type="match status" value="1"/>
</dbReference>
<dbReference type="PANTHER" id="PTHR42714">
    <property type="entry name" value="TRNA MODIFICATION GTPASE GTPBP3"/>
    <property type="match status" value="1"/>
</dbReference>
<dbReference type="PANTHER" id="PTHR42714:SF2">
    <property type="entry name" value="TRNA MODIFICATION GTPASE GTPBP3, MITOCHONDRIAL"/>
    <property type="match status" value="1"/>
</dbReference>
<dbReference type="Pfam" id="PF01926">
    <property type="entry name" value="MMR_HSR1"/>
    <property type="match status" value="1"/>
</dbReference>
<dbReference type="Pfam" id="PF12631">
    <property type="entry name" value="MnmE_helical"/>
    <property type="match status" value="1"/>
</dbReference>
<dbReference type="Pfam" id="PF10396">
    <property type="entry name" value="TrmE_N"/>
    <property type="match status" value="1"/>
</dbReference>
<dbReference type="SUPFAM" id="SSF52540">
    <property type="entry name" value="P-loop containing nucleoside triphosphate hydrolases"/>
    <property type="match status" value="1"/>
</dbReference>
<dbReference type="SUPFAM" id="SSF116878">
    <property type="entry name" value="TrmE connector domain"/>
    <property type="match status" value="1"/>
</dbReference>
<dbReference type="PROSITE" id="PS51709">
    <property type="entry name" value="G_TRME"/>
    <property type="match status" value="1"/>
</dbReference>
<accession>Q24M98</accession>
<comment type="function">
    <text evidence="1">Exhibits a very high intrinsic GTPase hydrolysis rate. Involved in the addition of a carboxymethylaminomethyl (cmnm) group at the wobble position (U34) of certain tRNAs, forming tRNA-cmnm(5)s(2)U34.</text>
</comment>
<comment type="cofactor">
    <cofactor evidence="1">
        <name>K(+)</name>
        <dbReference type="ChEBI" id="CHEBI:29103"/>
    </cofactor>
    <text evidence="1">Binds 1 potassium ion per subunit.</text>
</comment>
<comment type="subunit">
    <text evidence="1">Homodimer. Heterotetramer of two MnmE and two MnmG subunits.</text>
</comment>
<comment type="subcellular location">
    <subcellularLocation>
        <location evidence="1">Cytoplasm</location>
    </subcellularLocation>
</comment>
<comment type="similarity">
    <text evidence="1">Belongs to the TRAFAC class TrmE-Era-EngA-EngB-Septin-like GTPase superfamily. TrmE GTPase family.</text>
</comment>
<keyword id="KW-0963">Cytoplasm</keyword>
<keyword id="KW-0342">GTP-binding</keyword>
<keyword id="KW-0378">Hydrolase</keyword>
<keyword id="KW-0460">Magnesium</keyword>
<keyword id="KW-0479">Metal-binding</keyword>
<keyword id="KW-0547">Nucleotide-binding</keyword>
<keyword id="KW-0630">Potassium</keyword>
<keyword id="KW-1185">Reference proteome</keyword>
<keyword id="KW-0819">tRNA processing</keyword>
<proteinExistence type="inferred from homology"/>
<gene>
    <name evidence="1" type="primary">mnmE</name>
    <name evidence="1" type="synonym">trmE</name>
    <name type="ordered locus">DSY5055</name>
</gene>
<feature type="chain" id="PRO_0000345770" description="tRNA modification GTPase MnmE">
    <location>
        <begin position="1"/>
        <end position="459"/>
    </location>
</feature>
<feature type="domain" description="TrmE-type G">
    <location>
        <begin position="219"/>
        <end position="380"/>
    </location>
</feature>
<feature type="binding site" evidence="1">
    <location>
        <position position="21"/>
    </location>
    <ligand>
        <name>(6S)-5-formyl-5,6,7,8-tetrahydrofolate</name>
        <dbReference type="ChEBI" id="CHEBI:57457"/>
    </ligand>
</feature>
<feature type="binding site" evidence="1">
    <location>
        <position position="84"/>
    </location>
    <ligand>
        <name>(6S)-5-formyl-5,6,7,8-tetrahydrofolate</name>
        <dbReference type="ChEBI" id="CHEBI:57457"/>
    </ligand>
</feature>
<feature type="binding site" evidence="1">
    <location>
        <position position="123"/>
    </location>
    <ligand>
        <name>(6S)-5-formyl-5,6,7,8-tetrahydrofolate</name>
        <dbReference type="ChEBI" id="CHEBI:57457"/>
    </ligand>
</feature>
<feature type="binding site" evidence="1">
    <location>
        <begin position="229"/>
        <end position="234"/>
    </location>
    <ligand>
        <name>GTP</name>
        <dbReference type="ChEBI" id="CHEBI:37565"/>
    </ligand>
</feature>
<feature type="binding site" evidence="1">
    <location>
        <position position="229"/>
    </location>
    <ligand>
        <name>K(+)</name>
        <dbReference type="ChEBI" id="CHEBI:29103"/>
    </ligand>
</feature>
<feature type="binding site" evidence="1">
    <location>
        <position position="233"/>
    </location>
    <ligand>
        <name>Mg(2+)</name>
        <dbReference type="ChEBI" id="CHEBI:18420"/>
    </ligand>
</feature>
<feature type="binding site" evidence="1">
    <location>
        <begin position="248"/>
        <end position="254"/>
    </location>
    <ligand>
        <name>GTP</name>
        <dbReference type="ChEBI" id="CHEBI:37565"/>
    </ligand>
</feature>
<feature type="binding site" evidence="1">
    <location>
        <position position="248"/>
    </location>
    <ligand>
        <name>K(+)</name>
        <dbReference type="ChEBI" id="CHEBI:29103"/>
    </ligand>
</feature>
<feature type="binding site" evidence="1">
    <location>
        <position position="250"/>
    </location>
    <ligand>
        <name>K(+)</name>
        <dbReference type="ChEBI" id="CHEBI:29103"/>
    </ligand>
</feature>
<feature type="binding site" evidence="1">
    <location>
        <position position="253"/>
    </location>
    <ligand>
        <name>K(+)</name>
        <dbReference type="ChEBI" id="CHEBI:29103"/>
    </ligand>
</feature>
<feature type="binding site" evidence="1">
    <location>
        <position position="254"/>
    </location>
    <ligand>
        <name>Mg(2+)</name>
        <dbReference type="ChEBI" id="CHEBI:18420"/>
    </ligand>
</feature>
<feature type="binding site" evidence="1">
    <location>
        <begin position="273"/>
        <end position="276"/>
    </location>
    <ligand>
        <name>GTP</name>
        <dbReference type="ChEBI" id="CHEBI:37565"/>
    </ligand>
</feature>
<feature type="binding site" evidence="1">
    <location>
        <position position="459"/>
    </location>
    <ligand>
        <name>(6S)-5-formyl-5,6,7,8-tetrahydrofolate</name>
        <dbReference type="ChEBI" id="CHEBI:57457"/>
    </ligand>
</feature>
<reference key="1">
    <citation type="journal article" date="2006" name="J. Bacteriol.">
        <title>Complete genome sequence of the dehalorespiring bacterium Desulfitobacterium hafniense Y51 and comparison with Dehalococcoides ethenogenes 195.</title>
        <authorList>
            <person name="Nonaka H."/>
            <person name="Keresztes G."/>
            <person name="Shinoda Y."/>
            <person name="Ikenaga Y."/>
            <person name="Abe M."/>
            <person name="Naito K."/>
            <person name="Inatomi K."/>
            <person name="Furukawa K."/>
            <person name="Inui M."/>
            <person name="Yukawa H."/>
        </authorList>
    </citation>
    <scope>NUCLEOTIDE SEQUENCE [LARGE SCALE GENOMIC DNA]</scope>
    <source>
        <strain>Y51</strain>
    </source>
</reference>
<protein>
    <recommendedName>
        <fullName evidence="1">tRNA modification GTPase MnmE</fullName>
        <ecNumber evidence="1">3.6.-.-</ecNumber>
    </recommendedName>
</protein>
<name>MNME_DESHY</name>
<organism>
    <name type="scientific">Desulfitobacterium hafniense (strain Y51)</name>
    <dbReference type="NCBI Taxonomy" id="138119"/>
    <lineage>
        <taxon>Bacteria</taxon>
        <taxon>Bacillati</taxon>
        <taxon>Bacillota</taxon>
        <taxon>Clostridia</taxon>
        <taxon>Eubacteriales</taxon>
        <taxon>Desulfitobacteriaceae</taxon>
        <taxon>Desulfitobacterium</taxon>
    </lineage>
</organism>
<sequence length="459" mass="50751">MDDTIIALATAVGEGSIHVLRLSGPQAQEIIERAFTPHHPQRWQEKSNFTLHLGYFRAGAKVLDEVLIGRMSAPGSYTGEDVYEINCHGGLYIAERIMRECIGLGARLAEAGEFTKRAFLNGKLDLIQAEAIVDLIAAKTDSSADLALAQMEGLLSQKILLLKDQVMETLAFIEAGIDFPEDDVESLDRDALLQRISKGLELARDLLDGSKTGRILREGMLTVIVGQPNVGKSSLLNALMGEERAIVTDIPGTTRDEIRESVTIGGILLQLVDTAGLRESEDLVEKLGIERSWKAMEKAELILLIIQAGQELKAEELKILSQYDQSVIVLINKMDLLAGKERGEEVLENYPTQQGVWIPFSVKENLGFKQLEKEIKQRVYQGKAEKTKEPLLSNIRQITALERAVSALANGWDSVKNGLPWDMVSIDIRQALQEISQMTGDSVQESLLDDIFSRFCIGK</sequence>